<dbReference type="EC" id="6.1.1.4" evidence="1"/>
<dbReference type="EMBL" id="AE014299">
    <property type="protein sequence ID" value="AAN54244.1"/>
    <property type="molecule type" value="Genomic_DNA"/>
</dbReference>
<dbReference type="RefSeq" id="NP_716799.1">
    <property type="nucleotide sequence ID" value="NC_004347.2"/>
</dbReference>
<dbReference type="RefSeq" id="WP_011071405.1">
    <property type="nucleotide sequence ID" value="NC_004347.2"/>
</dbReference>
<dbReference type="SMR" id="Q8EHP4"/>
<dbReference type="STRING" id="211586.SO_1174"/>
<dbReference type="PaxDb" id="211586-SO_1174"/>
<dbReference type="KEGG" id="son:SO_1174"/>
<dbReference type="PATRIC" id="fig|211586.12.peg.1126"/>
<dbReference type="eggNOG" id="COG0495">
    <property type="taxonomic scope" value="Bacteria"/>
</dbReference>
<dbReference type="HOGENOM" id="CLU_004427_0_0_6"/>
<dbReference type="OrthoDB" id="9810365at2"/>
<dbReference type="PhylomeDB" id="Q8EHP4"/>
<dbReference type="BioCyc" id="SONE211586:G1GMP-1078-MONOMER"/>
<dbReference type="Proteomes" id="UP000008186">
    <property type="component" value="Chromosome"/>
</dbReference>
<dbReference type="GO" id="GO:0005829">
    <property type="term" value="C:cytosol"/>
    <property type="evidence" value="ECO:0000318"/>
    <property type="project" value="GO_Central"/>
</dbReference>
<dbReference type="GO" id="GO:0002161">
    <property type="term" value="F:aminoacyl-tRNA deacylase activity"/>
    <property type="evidence" value="ECO:0007669"/>
    <property type="project" value="InterPro"/>
</dbReference>
<dbReference type="GO" id="GO:0005524">
    <property type="term" value="F:ATP binding"/>
    <property type="evidence" value="ECO:0007669"/>
    <property type="project" value="UniProtKB-UniRule"/>
</dbReference>
<dbReference type="GO" id="GO:0004823">
    <property type="term" value="F:leucine-tRNA ligase activity"/>
    <property type="evidence" value="ECO:0000318"/>
    <property type="project" value="GO_Central"/>
</dbReference>
<dbReference type="GO" id="GO:0006429">
    <property type="term" value="P:leucyl-tRNA aminoacylation"/>
    <property type="evidence" value="ECO:0000318"/>
    <property type="project" value="GO_Central"/>
</dbReference>
<dbReference type="CDD" id="cd07958">
    <property type="entry name" value="Anticodon_Ia_Leu_BEm"/>
    <property type="match status" value="1"/>
</dbReference>
<dbReference type="CDD" id="cd00812">
    <property type="entry name" value="LeuRS_core"/>
    <property type="match status" value="1"/>
</dbReference>
<dbReference type="FunFam" id="1.10.730.10:FF:000003">
    <property type="entry name" value="Leucine--tRNA ligase"/>
    <property type="match status" value="1"/>
</dbReference>
<dbReference type="FunFam" id="2.20.28.290:FF:000001">
    <property type="entry name" value="Leucine--tRNA ligase"/>
    <property type="match status" value="1"/>
</dbReference>
<dbReference type="FunFam" id="3.10.20.590:FF:000001">
    <property type="entry name" value="Leucine--tRNA ligase"/>
    <property type="match status" value="1"/>
</dbReference>
<dbReference type="FunFam" id="3.40.50.620:FF:000003">
    <property type="entry name" value="Leucine--tRNA ligase"/>
    <property type="match status" value="1"/>
</dbReference>
<dbReference type="FunFam" id="3.40.50.620:FF:000124">
    <property type="entry name" value="Leucine--tRNA ligase"/>
    <property type="match status" value="1"/>
</dbReference>
<dbReference type="FunFam" id="3.90.740.10:FF:000012">
    <property type="entry name" value="Leucine--tRNA ligase"/>
    <property type="match status" value="1"/>
</dbReference>
<dbReference type="Gene3D" id="2.20.28.290">
    <property type="match status" value="1"/>
</dbReference>
<dbReference type="Gene3D" id="3.10.20.590">
    <property type="match status" value="1"/>
</dbReference>
<dbReference type="Gene3D" id="3.40.50.620">
    <property type="entry name" value="HUPs"/>
    <property type="match status" value="2"/>
</dbReference>
<dbReference type="Gene3D" id="1.10.730.10">
    <property type="entry name" value="Isoleucyl-tRNA Synthetase, Domain 1"/>
    <property type="match status" value="1"/>
</dbReference>
<dbReference type="HAMAP" id="MF_00049_B">
    <property type="entry name" value="Leu_tRNA_synth_B"/>
    <property type="match status" value="1"/>
</dbReference>
<dbReference type="InterPro" id="IPR001412">
    <property type="entry name" value="aa-tRNA-synth_I_CS"/>
</dbReference>
<dbReference type="InterPro" id="IPR002300">
    <property type="entry name" value="aa-tRNA-synth_Ia"/>
</dbReference>
<dbReference type="InterPro" id="IPR002302">
    <property type="entry name" value="Leu-tRNA-ligase"/>
</dbReference>
<dbReference type="InterPro" id="IPR025709">
    <property type="entry name" value="Leu_tRNA-synth_edit"/>
</dbReference>
<dbReference type="InterPro" id="IPR013155">
    <property type="entry name" value="M/V/L/I-tRNA-synth_anticd-bd"/>
</dbReference>
<dbReference type="InterPro" id="IPR015413">
    <property type="entry name" value="Methionyl/Leucyl_tRNA_Synth"/>
</dbReference>
<dbReference type="InterPro" id="IPR014729">
    <property type="entry name" value="Rossmann-like_a/b/a_fold"/>
</dbReference>
<dbReference type="InterPro" id="IPR009080">
    <property type="entry name" value="tRNAsynth_Ia_anticodon-bd"/>
</dbReference>
<dbReference type="InterPro" id="IPR009008">
    <property type="entry name" value="Val/Leu/Ile-tRNA-synth_edit"/>
</dbReference>
<dbReference type="NCBIfam" id="TIGR00396">
    <property type="entry name" value="leuS_bact"/>
    <property type="match status" value="1"/>
</dbReference>
<dbReference type="PANTHER" id="PTHR43740:SF2">
    <property type="entry name" value="LEUCINE--TRNA LIGASE, MITOCHONDRIAL"/>
    <property type="match status" value="1"/>
</dbReference>
<dbReference type="PANTHER" id="PTHR43740">
    <property type="entry name" value="LEUCYL-TRNA SYNTHETASE"/>
    <property type="match status" value="1"/>
</dbReference>
<dbReference type="Pfam" id="PF08264">
    <property type="entry name" value="Anticodon_1"/>
    <property type="match status" value="1"/>
</dbReference>
<dbReference type="Pfam" id="PF00133">
    <property type="entry name" value="tRNA-synt_1"/>
    <property type="match status" value="2"/>
</dbReference>
<dbReference type="Pfam" id="PF13603">
    <property type="entry name" value="tRNA-synt_1_2"/>
    <property type="match status" value="1"/>
</dbReference>
<dbReference type="Pfam" id="PF09334">
    <property type="entry name" value="tRNA-synt_1g"/>
    <property type="match status" value="1"/>
</dbReference>
<dbReference type="PRINTS" id="PR00985">
    <property type="entry name" value="TRNASYNTHLEU"/>
</dbReference>
<dbReference type="SUPFAM" id="SSF47323">
    <property type="entry name" value="Anticodon-binding domain of a subclass of class I aminoacyl-tRNA synthetases"/>
    <property type="match status" value="1"/>
</dbReference>
<dbReference type="SUPFAM" id="SSF52374">
    <property type="entry name" value="Nucleotidylyl transferase"/>
    <property type="match status" value="1"/>
</dbReference>
<dbReference type="SUPFAM" id="SSF50677">
    <property type="entry name" value="ValRS/IleRS/LeuRS editing domain"/>
    <property type="match status" value="1"/>
</dbReference>
<dbReference type="PROSITE" id="PS00178">
    <property type="entry name" value="AA_TRNA_LIGASE_I"/>
    <property type="match status" value="1"/>
</dbReference>
<sequence>MQEQYNPSEIEALVQKHWHDTKTFEVTEDQNKEKFYCLSMFPYPSGRLHMGHVRNYTIGDVVARFQRLQGKNVLQPIGWDSFGLPAENAAINNKTAPAPWTYQNIEYMKNQLKLLGFGYDWSREIATCTPEYYRWEQWFFTKLYEKGLVYKKTASVNWCPNDETVLANEQVQDGCCWRCDTPVEQKEIPQWFIKITAYAEELLNDIDTLDGWPEQVKTMQRNWIGRSEGVEMTFGVAGSDKSFDIYTTRPDTLMGVTYVAIAAGHPLAEIAAQTNPELAAFIDECKNSTTSEAELATMEKRGVATGLYAIHPITGKQVPIWAANFVLMNYGTGAVMSVPGHDQRDYEFAKKYHLPIEAVIKPAEGDLDISEAAYTEKGILFNSGEFDGLDFDGAFNVIANKLVAEGKGKRQVNYRLRDWGVSRQRYWGAPIPMVTLADGTVIPTPEDQLPVILPEDVVMDGIQSPIKADKEWAKTQVNGQDALRETDTFDTFMESSWYYARYCSPQAEQMLDPTKANYWLPVDQYIGGIEHACMHLLYFRFFHKLLRDAGLVNTNEPAKQLLTQGMVLADAFYYTNDKGARVWVSPLDVATTEKDDKGRITKAIDKDGNELVYTGMCKMSKSKNNGIDPQVMVEKYGADTVRLFMMFASPPELTLEWQESGVEGAHRFIKRLWKLASEYVAQDNSEALDVSKLTSEQKALRREVHKTIAKVTDDIGRRQMFNTAVAAVMELMNHLQKAPQTTGQDRAIIGEALSAVVRLLYPIIPHVSFTLWNELGNTNSIEDSQWPVVDESALVEDSKLIVVQVNGKVRAKITVAADADQASVEALGMADEQVIKYLDGVTVRKVIYVPGKLLSIVAN</sequence>
<feature type="chain" id="PRO_0000152079" description="Leucine--tRNA ligase">
    <location>
        <begin position="1"/>
        <end position="859"/>
    </location>
</feature>
<feature type="short sequence motif" description="'HIGH' region">
    <location>
        <begin position="42"/>
        <end position="52"/>
    </location>
</feature>
<feature type="short sequence motif" description="'KMSKS' region">
    <location>
        <begin position="618"/>
        <end position="622"/>
    </location>
</feature>
<feature type="binding site" evidence="1">
    <location>
        <position position="621"/>
    </location>
    <ligand>
        <name>ATP</name>
        <dbReference type="ChEBI" id="CHEBI:30616"/>
    </ligand>
</feature>
<gene>
    <name evidence="1" type="primary">leuS</name>
    <name type="ordered locus">SO_1174</name>
</gene>
<proteinExistence type="inferred from homology"/>
<reference key="1">
    <citation type="journal article" date="2002" name="Nat. Biotechnol.">
        <title>Genome sequence of the dissimilatory metal ion-reducing bacterium Shewanella oneidensis.</title>
        <authorList>
            <person name="Heidelberg J.F."/>
            <person name="Paulsen I.T."/>
            <person name="Nelson K.E."/>
            <person name="Gaidos E.J."/>
            <person name="Nelson W.C."/>
            <person name="Read T.D."/>
            <person name="Eisen J.A."/>
            <person name="Seshadri R."/>
            <person name="Ward N.L."/>
            <person name="Methe B.A."/>
            <person name="Clayton R.A."/>
            <person name="Meyer T."/>
            <person name="Tsapin A."/>
            <person name="Scott J."/>
            <person name="Beanan M.J."/>
            <person name="Brinkac L.M."/>
            <person name="Daugherty S.C."/>
            <person name="DeBoy R.T."/>
            <person name="Dodson R.J."/>
            <person name="Durkin A.S."/>
            <person name="Haft D.H."/>
            <person name="Kolonay J.F."/>
            <person name="Madupu R."/>
            <person name="Peterson J.D."/>
            <person name="Umayam L.A."/>
            <person name="White O."/>
            <person name="Wolf A.M."/>
            <person name="Vamathevan J.J."/>
            <person name="Weidman J.F."/>
            <person name="Impraim M."/>
            <person name="Lee K."/>
            <person name="Berry K.J."/>
            <person name="Lee C."/>
            <person name="Mueller J."/>
            <person name="Khouri H.M."/>
            <person name="Gill J."/>
            <person name="Utterback T.R."/>
            <person name="McDonald L.A."/>
            <person name="Feldblyum T.V."/>
            <person name="Smith H.O."/>
            <person name="Venter J.C."/>
            <person name="Nealson K.H."/>
            <person name="Fraser C.M."/>
        </authorList>
    </citation>
    <scope>NUCLEOTIDE SEQUENCE [LARGE SCALE GENOMIC DNA]</scope>
    <source>
        <strain>ATCC 700550 / JCM 31522 / CIP 106686 / LMG 19005 / NCIMB 14063 / MR-1</strain>
    </source>
</reference>
<keyword id="KW-0030">Aminoacyl-tRNA synthetase</keyword>
<keyword id="KW-0067">ATP-binding</keyword>
<keyword id="KW-0963">Cytoplasm</keyword>
<keyword id="KW-0436">Ligase</keyword>
<keyword id="KW-0547">Nucleotide-binding</keyword>
<keyword id="KW-0648">Protein biosynthesis</keyword>
<keyword id="KW-1185">Reference proteome</keyword>
<name>SYL_SHEON</name>
<accession>Q8EHP4</accession>
<evidence type="ECO:0000255" key="1">
    <source>
        <dbReference type="HAMAP-Rule" id="MF_00049"/>
    </source>
</evidence>
<organism>
    <name type="scientific">Shewanella oneidensis (strain ATCC 700550 / JCM 31522 / CIP 106686 / LMG 19005 / NCIMB 14063 / MR-1)</name>
    <dbReference type="NCBI Taxonomy" id="211586"/>
    <lineage>
        <taxon>Bacteria</taxon>
        <taxon>Pseudomonadati</taxon>
        <taxon>Pseudomonadota</taxon>
        <taxon>Gammaproteobacteria</taxon>
        <taxon>Alteromonadales</taxon>
        <taxon>Shewanellaceae</taxon>
        <taxon>Shewanella</taxon>
    </lineage>
</organism>
<protein>
    <recommendedName>
        <fullName evidence="1">Leucine--tRNA ligase</fullName>
        <ecNumber evidence="1">6.1.1.4</ecNumber>
    </recommendedName>
    <alternativeName>
        <fullName evidence="1">Leucyl-tRNA synthetase</fullName>
        <shortName evidence="1">LeuRS</shortName>
    </alternativeName>
</protein>
<comment type="catalytic activity">
    <reaction evidence="1">
        <text>tRNA(Leu) + L-leucine + ATP = L-leucyl-tRNA(Leu) + AMP + diphosphate</text>
        <dbReference type="Rhea" id="RHEA:11688"/>
        <dbReference type="Rhea" id="RHEA-COMP:9613"/>
        <dbReference type="Rhea" id="RHEA-COMP:9622"/>
        <dbReference type="ChEBI" id="CHEBI:30616"/>
        <dbReference type="ChEBI" id="CHEBI:33019"/>
        <dbReference type="ChEBI" id="CHEBI:57427"/>
        <dbReference type="ChEBI" id="CHEBI:78442"/>
        <dbReference type="ChEBI" id="CHEBI:78494"/>
        <dbReference type="ChEBI" id="CHEBI:456215"/>
        <dbReference type="EC" id="6.1.1.4"/>
    </reaction>
</comment>
<comment type="subcellular location">
    <subcellularLocation>
        <location evidence="1">Cytoplasm</location>
    </subcellularLocation>
</comment>
<comment type="similarity">
    <text evidence="1">Belongs to the class-I aminoacyl-tRNA synthetase family.</text>
</comment>